<dbReference type="EC" id="2.7.11.1" evidence="2"/>
<dbReference type="EMBL" id="AY336974">
    <property type="protein sequence ID" value="AAQ16150.1"/>
    <property type="molecule type" value="mRNA"/>
</dbReference>
<dbReference type="EMBL" id="AF244364">
    <property type="protein sequence ID" value="AAF61735.1"/>
    <property type="molecule type" value="mRNA"/>
</dbReference>
<dbReference type="RefSeq" id="NP_999084.1">
    <property type="nucleotide sequence ID" value="NM_213919.1"/>
</dbReference>
<dbReference type="SMR" id="Q9N0X0"/>
<dbReference type="FunCoup" id="Q9N0X0">
    <property type="interactions" value="766"/>
</dbReference>
<dbReference type="STRING" id="9823.ENSSSCP00000061822"/>
<dbReference type="iPTMnet" id="Q9N0X0"/>
<dbReference type="PaxDb" id="9823-ENSSSCP00000022968"/>
<dbReference type="GeneID" id="396955"/>
<dbReference type="KEGG" id="ssc:396955"/>
<dbReference type="CTD" id="9212"/>
<dbReference type="eggNOG" id="KOG0580">
    <property type="taxonomic scope" value="Eukaryota"/>
</dbReference>
<dbReference type="InParanoid" id="Q9N0X0"/>
<dbReference type="OrthoDB" id="377346at2759"/>
<dbReference type="Proteomes" id="UP000008227">
    <property type="component" value="Unplaced"/>
</dbReference>
<dbReference type="Proteomes" id="UP000314985">
    <property type="component" value="Unplaced"/>
</dbReference>
<dbReference type="Proteomes" id="UP000694570">
    <property type="component" value="Unplaced"/>
</dbReference>
<dbReference type="Proteomes" id="UP000694571">
    <property type="component" value="Unplaced"/>
</dbReference>
<dbReference type="Proteomes" id="UP000694720">
    <property type="component" value="Unplaced"/>
</dbReference>
<dbReference type="Proteomes" id="UP000694722">
    <property type="component" value="Unplaced"/>
</dbReference>
<dbReference type="Proteomes" id="UP000694723">
    <property type="component" value="Unplaced"/>
</dbReference>
<dbReference type="Proteomes" id="UP000694724">
    <property type="component" value="Unplaced"/>
</dbReference>
<dbReference type="Proteomes" id="UP000694725">
    <property type="component" value="Unplaced"/>
</dbReference>
<dbReference type="Proteomes" id="UP000694726">
    <property type="component" value="Unplaced"/>
</dbReference>
<dbReference type="Proteomes" id="UP000694727">
    <property type="component" value="Unplaced"/>
</dbReference>
<dbReference type="Proteomes" id="UP000694728">
    <property type="component" value="Unplaced"/>
</dbReference>
<dbReference type="GO" id="GO:0005813">
    <property type="term" value="C:centrosome"/>
    <property type="evidence" value="ECO:0000318"/>
    <property type="project" value="GO_Central"/>
</dbReference>
<dbReference type="GO" id="GO:0032133">
    <property type="term" value="C:chromosome passenger complex"/>
    <property type="evidence" value="ECO:0000318"/>
    <property type="project" value="GO_Central"/>
</dbReference>
<dbReference type="GO" id="GO:0005737">
    <property type="term" value="C:cytoplasm"/>
    <property type="evidence" value="ECO:0007669"/>
    <property type="project" value="UniProtKB-KW"/>
</dbReference>
<dbReference type="GO" id="GO:0000776">
    <property type="term" value="C:kinetochore"/>
    <property type="evidence" value="ECO:0000250"/>
    <property type="project" value="UniProtKB"/>
</dbReference>
<dbReference type="GO" id="GO:0030496">
    <property type="term" value="C:midbody"/>
    <property type="evidence" value="ECO:0000250"/>
    <property type="project" value="UniProtKB"/>
</dbReference>
<dbReference type="GO" id="GO:0005634">
    <property type="term" value="C:nucleus"/>
    <property type="evidence" value="ECO:0000250"/>
    <property type="project" value="UniProtKB"/>
</dbReference>
<dbReference type="GO" id="GO:0005876">
    <property type="term" value="C:spindle microtubule"/>
    <property type="evidence" value="ECO:0000318"/>
    <property type="project" value="GO_Central"/>
</dbReference>
<dbReference type="GO" id="GO:0051233">
    <property type="term" value="C:spindle midzone"/>
    <property type="evidence" value="ECO:0000318"/>
    <property type="project" value="GO_Central"/>
</dbReference>
<dbReference type="GO" id="GO:0000922">
    <property type="term" value="C:spindle pole"/>
    <property type="evidence" value="ECO:0000318"/>
    <property type="project" value="GO_Central"/>
</dbReference>
<dbReference type="GO" id="GO:0005524">
    <property type="term" value="F:ATP binding"/>
    <property type="evidence" value="ECO:0007669"/>
    <property type="project" value="UniProtKB-KW"/>
</dbReference>
<dbReference type="GO" id="GO:0106310">
    <property type="term" value="F:protein serine kinase activity"/>
    <property type="evidence" value="ECO:0007669"/>
    <property type="project" value="RHEA"/>
</dbReference>
<dbReference type="GO" id="GO:0004674">
    <property type="term" value="F:protein serine/threonine kinase activity"/>
    <property type="evidence" value="ECO:0000250"/>
    <property type="project" value="UniProtKB"/>
</dbReference>
<dbReference type="GO" id="GO:0034644">
    <property type="term" value="P:cellular response to UV"/>
    <property type="evidence" value="ECO:0000250"/>
    <property type="project" value="UniProtKB"/>
</dbReference>
<dbReference type="GO" id="GO:0036089">
    <property type="term" value="P:cleavage furrow formation"/>
    <property type="evidence" value="ECO:0000250"/>
    <property type="project" value="UniProtKB"/>
</dbReference>
<dbReference type="GO" id="GO:0061952">
    <property type="term" value="P:midbody abscission"/>
    <property type="evidence" value="ECO:0000250"/>
    <property type="project" value="UniProtKB"/>
</dbReference>
<dbReference type="GO" id="GO:0044878">
    <property type="term" value="P:mitotic cytokinesis checkpoint signaling"/>
    <property type="evidence" value="ECO:0000250"/>
    <property type="project" value="UniProtKB"/>
</dbReference>
<dbReference type="GO" id="GO:1990758">
    <property type="term" value="P:mitotic sister chromatid biorientation"/>
    <property type="evidence" value="ECO:0000250"/>
    <property type="project" value="UniProtKB"/>
</dbReference>
<dbReference type="GO" id="GO:0051256">
    <property type="term" value="P:mitotic spindle midzone assembly"/>
    <property type="evidence" value="ECO:0000250"/>
    <property type="project" value="UniProtKB"/>
</dbReference>
<dbReference type="GO" id="GO:0007052">
    <property type="term" value="P:mitotic spindle organization"/>
    <property type="evidence" value="ECO:0000318"/>
    <property type="project" value="GO_Central"/>
</dbReference>
<dbReference type="GO" id="GO:0002903">
    <property type="term" value="P:negative regulation of B cell apoptotic process"/>
    <property type="evidence" value="ECO:0000250"/>
    <property type="project" value="UniProtKB"/>
</dbReference>
<dbReference type="GO" id="GO:0032466">
    <property type="term" value="P:negative regulation of cytokinesis"/>
    <property type="evidence" value="ECO:0000250"/>
    <property type="project" value="UniProtKB"/>
</dbReference>
<dbReference type="GO" id="GO:0000122">
    <property type="term" value="P:negative regulation of transcription by RNA polymerase II"/>
    <property type="evidence" value="ECO:0000250"/>
    <property type="project" value="UniProtKB"/>
</dbReference>
<dbReference type="GO" id="GO:0032467">
    <property type="term" value="P:positive regulation of cytokinesis"/>
    <property type="evidence" value="ECO:0000250"/>
    <property type="project" value="UniProtKB"/>
</dbReference>
<dbReference type="GO" id="GO:0062033">
    <property type="term" value="P:positive regulation of mitotic sister chromatid segregation"/>
    <property type="evidence" value="ECO:0000250"/>
    <property type="project" value="UniProtKB"/>
</dbReference>
<dbReference type="GO" id="GO:0043687">
    <property type="term" value="P:post-translational protein modification"/>
    <property type="evidence" value="ECO:0000250"/>
    <property type="project" value="UniProtKB"/>
</dbReference>
<dbReference type="GO" id="GO:0034501">
    <property type="term" value="P:protein localization to kinetochore"/>
    <property type="evidence" value="ECO:0000250"/>
    <property type="project" value="UniProtKB"/>
</dbReference>
<dbReference type="GO" id="GO:0032465">
    <property type="term" value="P:regulation of cytokinesis"/>
    <property type="evidence" value="ECO:0000318"/>
    <property type="project" value="GO_Central"/>
</dbReference>
<dbReference type="GO" id="GO:0140273">
    <property type="term" value="P:repair of mitotic kinetochore microtubule attachment defect"/>
    <property type="evidence" value="ECO:0000250"/>
    <property type="project" value="UniProtKB"/>
</dbReference>
<dbReference type="CDD" id="cd14117">
    <property type="entry name" value="STKc_Aurora-B_like"/>
    <property type="match status" value="1"/>
</dbReference>
<dbReference type="FunFam" id="3.30.200.20:FF:000042">
    <property type="entry name" value="Aurora kinase A"/>
    <property type="match status" value="1"/>
</dbReference>
<dbReference type="FunFam" id="1.10.510.10:FF:000235">
    <property type="entry name" value="Serine/threonine-protein kinase ark1"/>
    <property type="match status" value="1"/>
</dbReference>
<dbReference type="Gene3D" id="3.30.200.20">
    <property type="entry name" value="Phosphorylase Kinase, domain 1"/>
    <property type="match status" value="1"/>
</dbReference>
<dbReference type="Gene3D" id="1.10.510.10">
    <property type="entry name" value="Transferase(Phosphotransferase) domain 1"/>
    <property type="match status" value="1"/>
</dbReference>
<dbReference type="InterPro" id="IPR030616">
    <property type="entry name" value="Aur-like"/>
</dbReference>
<dbReference type="InterPro" id="IPR011009">
    <property type="entry name" value="Kinase-like_dom_sf"/>
</dbReference>
<dbReference type="InterPro" id="IPR000719">
    <property type="entry name" value="Prot_kinase_dom"/>
</dbReference>
<dbReference type="InterPro" id="IPR017441">
    <property type="entry name" value="Protein_kinase_ATP_BS"/>
</dbReference>
<dbReference type="InterPro" id="IPR008271">
    <property type="entry name" value="Ser/Thr_kinase_AS"/>
</dbReference>
<dbReference type="PANTHER" id="PTHR24350">
    <property type="entry name" value="SERINE/THREONINE-PROTEIN KINASE IAL-RELATED"/>
    <property type="match status" value="1"/>
</dbReference>
<dbReference type="Pfam" id="PF00069">
    <property type="entry name" value="Pkinase"/>
    <property type="match status" value="1"/>
</dbReference>
<dbReference type="SMART" id="SM00220">
    <property type="entry name" value="S_TKc"/>
    <property type="match status" value="1"/>
</dbReference>
<dbReference type="SUPFAM" id="SSF56112">
    <property type="entry name" value="Protein kinase-like (PK-like)"/>
    <property type="match status" value="1"/>
</dbReference>
<dbReference type="PROSITE" id="PS00107">
    <property type="entry name" value="PROTEIN_KINASE_ATP"/>
    <property type="match status" value="1"/>
</dbReference>
<dbReference type="PROSITE" id="PS50011">
    <property type="entry name" value="PROTEIN_KINASE_DOM"/>
    <property type="match status" value="1"/>
</dbReference>
<dbReference type="PROSITE" id="PS00108">
    <property type="entry name" value="PROTEIN_KINASE_ST"/>
    <property type="match status" value="1"/>
</dbReference>
<sequence length="344" mass="39222">MAQKENTYPWPYGRQTAQSGLNILPQRVLRKEAVTPSALVLMSRSNTQPTAAPGQKVVENSSGTPNFSTRSFTIDDFEIGRPLGKGKFGNVYLAREKKSHFIVALKVLFKSQIEKEGVEHQLRREIEIQAHLQHPNILRLYNYFYDRRRIYLILEYAPRGELYKELQKCRTFDEQRTATIMEELADALIYCHGKKVIHRDIKPENLLLGLQGELKIADFGWSVHAPSLRRKTMCGTLDYLPPEMIEGRTHNEKVDLWCIGVLCYELLVGNPPFESASHNETYRRIGKVDLKFPPSVPAGAQDLISKLLKHNPSDRLPLAQVSAHPWVRAHSRRVLPPSAPQSVP</sequence>
<keyword id="KW-0007">Acetylation</keyword>
<keyword id="KW-0067">ATP-binding</keyword>
<keyword id="KW-0131">Cell cycle</keyword>
<keyword id="KW-0132">Cell division</keyword>
<keyword id="KW-0137">Centromere</keyword>
<keyword id="KW-0158">Chromosome</keyword>
<keyword id="KW-0963">Cytoplasm</keyword>
<keyword id="KW-0206">Cytoskeleton</keyword>
<keyword id="KW-0418">Kinase</keyword>
<keyword id="KW-0995">Kinetochore</keyword>
<keyword id="KW-0498">Mitosis</keyword>
<keyword id="KW-0547">Nucleotide-binding</keyword>
<keyword id="KW-0539">Nucleus</keyword>
<keyword id="KW-0597">Phosphoprotein</keyword>
<keyword id="KW-1185">Reference proteome</keyword>
<keyword id="KW-0723">Serine/threonine-protein kinase</keyword>
<keyword id="KW-0808">Transferase</keyword>
<keyword id="KW-0832">Ubl conjugation</keyword>
<reference key="1">
    <citation type="submission" date="2003-07" db="EMBL/GenBank/DDBJ databases">
        <title>Cloning of Sus scrofa STK12.</title>
        <authorList>
            <person name="Zhou G."/>
            <person name="Li W."/>
            <person name="Yu L."/>
        </authorList>
    </citation>
    <scope>NUCLEOTIDE SEQUENCE [MRNA]</scope>
</reference>
<reference key="2">
    <citation type="journal article" date="2002" name="Transplant. Proc.">
        <title>Differential gene expression during intestinal ischemia-reperfusion injury.</title>
        <authorList>
            <person name="Braun F."/>
            <person name="Hosseini S.M."/>
            <person name="Lorf T."/>
            <person name="Laabs S."/>
            <person name="Ringe B."/>
        </authorList>
    </citation>
    <scope>NUCLEOTIDE SEQUENCE [MRNA] OF 150-305</scope>
    <source>
        <tissue>Small intestine</tissue>
    </source>
</reference>
<organism>
    <name type="scientific">Sus scrofa</name>
    <name type="common">Pig</name>
    <dbReference type="NCBI Taxonomy" id="9823"/>
    <lineage>
        <taxon>Eukaryota</taxon>
        <taxon>Metazoa</taxon>
        <taxon>Chordata</taxon>
        <taxon>Craniata</taxon>
        <taxon>Vertebrata</taxon>
        <taxon>Euteleostomi</taxon>
        <taxon>Mammalia</taxon>
        <taxon>Eutheria</taxon>
        <taxon>Laurasiatheria</taxon>
        <taxon>Artiodactyla</taxon>
        <taxon>Suina</taxon>
        <taxon>Suidae</taxon>
        <taxon>Sus</taxon>
    </lineage>
</organism>
<accession>Q9N0X0</accession>
<accession>Q7YRC7</accession>
<evidence type="ECO:0000250" key="1">
    <source>
        <dbReference type="UniProtKB" id="O70126"/>
    </source>
</evidence>
<evidence type="ECO:0000250" key="2">
    <source>
        <dbReference type="UniProtKB" id="Q96GD4"/>
    </source>
</evidence>
<evidence type="ECO:0000255" key="3">
    <source>
        <dbReference type="PROSITE-ProRule" id="PRU00159"/>
    </source>
</evidence>
<evidence type="ECO:0000255" key="4">
    <source>
        <dbReference type="PROSITE-ProRule" id="PRU10027"/>
    </source>
</evidence>
<evidence type="ECO:0000305" key="5"/>
<proteinExistence type="evidence at transcript level"/>
<protein>
    <recommendedName>
        <fullName>Aurora kinase B</fullName>
        <ecNumber evidence="2">2.7.11.1</ecNumber>
    </recommendedName>
    <alternativeName>
        <fullName>Aurora 1</fullName>
    </alternativeName>
    <alternativeName>
        <fullName>Aurora- and IPL1-like midbody-associated protein 1</fullName>
        <shortName>AIM-1</shortName>
    </alternativeName>
    <alternativeName>
        <fullName>Aurora/IPL1-related kinase 2</fullName>
        <shortName>ARK-2</shortName>
        <shortName>Aurora-related kinase 2</shortName>
    </alternativeName>
    <alternativeName>
        <fullName>STK-1</fullName>
    </alternativeName>
    <alternativeName>
        <fullName>Serine/threonine-protein kinase 12</fullName>
    </alternativeName>
    <alternativeName>
        <fullName>Serine/threonine-protein kinase 5</fullName>
    </alternativeName>
    <alternativeName>
        <fullName>Serine/threonine-protein kinase aurora-B</fullName>
    </alternativeName>
</protein>
<gene>
    <name type="primary">AURKB</name>
    <name type="synonym">AIK2</name>
    <name type="synonym">AIM1</name>
    <name type="synonym">AIRK2</name>
    <name type="synonym">ARK2</name>
    <name type="synonym">STK1</name>
    <name type="synonym">STK12</name>
    <name type="synonym">STK5</name>
</gene>
<feature type="chain" id="PRO_0000085658" description="Aurora kinase B">
    <location>
        <begin position="1"/>
        <end position="344"/>
    </location>
</feature>
<feature type="domain" description="Protein kinase" evidence="3">
    <location>
        <begin position="77"/>
        <end position="327"/>
    </location>
</feature>
<feature type="active site" description="Proton acceptor" evidence="3 4">
    <location>
        <position position="200"/>
    </location>
</feature>
<feature type="binding site" evidence="3">
    <location>
        <begin position="83"/>
        <end position="91"/>
    </location>
    <ligand>
        <name>ATP</name>
        <dbReference type="ChEBI" id="CHEBI:30616"/>
    </ligand>
</feature>
<feature type="binding site" evidence="3">
    <location>
        <position position="106"/>
    </location>
    <ligand>
        <name>ATP</name>
        <dbReference type="ChEBI" id="CHEBI:30616"/>
    </ligand>
</feature>
<feature type="modified residue" description="Phosphothreonine" evidence="2">
    <location>
        <position position="35"/>
    </location>
</feature>
<feature type="modified residue" description="Phosphoserine" evidence="2">
    <location>
        <position position="62"/>
    </location>
</feature>
<feature type="modified residue" description="Phosphothreonine" evidence="2">
    <location>
        <position position="64"/>
    </location>
</feature>
<feature type="modified residue" description="N6-acetyllysine" evidence="2">
    <location>
        <position position="215"/>
    </location>
</feature>
<feature type="modified residue" description="Phosphoserine" evidence="2">
    <location>
        <position position="227"/>
    </location>
</feature>
<feature type="modified residue" description="Phosphothreonine; by autocatalysis" evidence="2">
    <location>
        <position position="232"/>
    </location>
</feature>
<feature type="sequence conflict" description="In Ref. 2; AAF61735." evidence="5" ref="2">
    <original>C</original>
    <variation>R</variation>
    <location>
        <position position="234"/>
    </location>
</feature>
<feature type="sequence conflict" description="In Ref. 2; AAF61735." evidence="5" ref="2">
    <original>G</original>
    <variation>V</variation>
    <location>
        <position position="286"/>
    </location>
</feature>
<comment type="function">
    <text evidence="1 2">Serine/threonine-protein kinase component of the chromosomal passenger complex (CPC), a complex that acts as a key regulator of mitosis. The CPC complex has essential functions at the centromere in ensuring correct chromosome alignment and segregation and is required for chromatin-induced microtubule stabilization and spindle assembly. Involved in the bipolar attachment of spindle microtubules to kinetochores and is a key regulator for the onset of cytokinesis during mitosis. Required for central/midzone spindle assembly and cleavage furrow formation. Key component of the cytokinesis checkpoint, a process required to delay abscission to prevent both premature resolution of intercellular chromosome bridges and accumulation of DNA damage: phosphorylates CHMP4C, leading to retain abscission-competent VPS4 (VPS4A and/or VPS4B) at the midbody ring until abscission checkpoint signaling is terminated at late cytokinesis. AURKB phosphorylates the CPC complex subunits BIRC5/survivin, CDCA8/borealin and INCENP. Phosphorylation of INCENP leads to increased AURKB activity. Other known AURKB substrates involved in centromeric functions and mitosis are CENPA, DES/desmin, GPAF, KIF2C, NSUN2, RACGAP1, SEPTIN1, VIM/vimentin, HASPIN, and histone H3. A positive feedback loop involving HASPIN and AURKB contributes to localization of CPC to centromeres. Phosphorylation of VIM controls vimentin filament segregation in cytokinetic process, whereas histone H3 is phosphorylated at 'Ser-10' and 'Ser-28' during mitosis (H3S10ph and H3S28ph, respectively). AURKB is also required for kinetochore localization of BUB1 and SGO1. Phosphorylation of p53/TP53 negatively regulates its transcriptional activity (By similarity). Key regulator of active promoters in resting B- and T-lymphocytes: acts by mediating phosphorylation of H3S28ph at active promoters in resting B-cells, inhibiting RNF2/RING1B-mediated ubiquitination of histone H2A and enhancing binding and activity of the USP16 deubiquitinase at transcribed genes (By similarity). Acts as an inhibitor of CGAS during mitosis: catalyzes phosphorylation of the N-terminus of CGAS during the G2-M transition, blocking CGAS liquid phase separation and activation, and thereby preventing CGAS-induced autoimmunity (By similarity). Phosphorylates KRT5 during anaphase and telophase (By similarity). Phosphorylates ATXN10 which promotes phosphorylation of ATXN10 by PLK1 and may play a role in the regulation of cytokinesis and stimulating the proteasomal degradation of ATXN10 (By similarity).</text>
</comment>
<comment type="catalytic activity">
    <reaction evidence="2">
        <text>L-seryl-[protein] + ATP = O-phospho-L-seryl-[protein] + ADP + H(+)</text>
        <dbReference type="Rhea" id="RHEA:17989"/>
        <dbReference type="Rhea" id="RHEA-COMP:9863"/>
        <dbReference type="Rhea" id="RHEA-COMP:11604"/>
        <dbReference type="ChEBI" id="CHEBI:15378"/>
        <dbReference type="ChEBI" id="CHEBI:29999"/>
        <dbReference type="ChEBI" id="CHEBI:30616"/>
        <dbReference type="ChEBI" id="CHEBI:83421"/>
        <dbReference type="ChEBI" id="CHEBI:456216"/>
        <dbReference type="EC" id="2.7.11.1"/>
    </reaction>
</comment>
<comment type="catalytic activity">
    <reaction evidence="2">
        <text>L-threonyl-[protein] + ATP = O-phospho-L-threonyl-[protein] + ADP + H(+)</text>
        <dbReference type="Rhea" id="RHEA:46608"/>
        <dbReference type="Rhea" id="RHEA-COMP:11060"/>
        <dbReference type="Rhea" id="RHEA-COMP:11605"/>
        <dbReference type="ChEBI" id="CHEBI:15378"/>
        <dbReference type="ChEBI" id="CHEBI:30013"/>
        <dbReference type="ChEBI" id="CHEBI:30616"/>
        <dbReference type="ChEBI" id="CHEBI:61977"/>
        <dbReference type="ChEBI" id="CHEBI:456216"/>
        <dbReference type="EC" id="2.7.11.1"/>
    </reaction>
</comment>
<comment type="activity regulation">
    <text evidence="2">Activity is greatly increased when AURKB is within the CPC complex. In particular, AURKB-phosphorylated INCENP acts as an activator of AURKB. Positive feedback between HASPIN and AURKB contributes to CPC localization.</text>
</comment>
<comment type="subunit">
    <text evidence="1 2">Component of the chromosomal passenger complex (CPC) composed of at least BIRC5/survivin, CDCA8/borealin, INCENP, AURKB or AURKC; predominantly independent AURKB- and AURKC-containing complexes exist. Associates with RACGAP1 during M phase. Interacts with SPDYC; this interaction may be required for proper localization of active, Thr-232-phosphorylated AURKB form during prometaphase and metaphase. Interacts with p53/TP53. Interacts (via the middle kinase domain) with NOC2L (via the N- and C-terminus domains). Interacts with CDCA1. Interacts with EVI5. Interacts with JTB. Interacts with NDC80. Interacts with PSMA3 (By similarity). Interacts with RNF2/RING1B (By similarity). Interacts with SEPTIN1. Interacts with SIRT2. Interacts with TACC1. Interacts with TTC28 (By similarity).</text>
</comment>
<comment type="subcellular location">
    <subcellularLocation>
        <location evidence="2">Nucleus</location>
    </subcellularLocation>
    <subcellularLocation>
        <location evidence="2">Chromosome</location>
    </subcellularLocation>
    <subcellularLocation>
        <location evidence="2">Chromosome</location>
        <location evidence="2">Centromere</location>
    </subcellularLocation>
    <subcellularLocation>
        <location evidence="2">Chromosome</location>
        <location evidence="2">Centromere</location>
        <location evidence="2">Kinetochore</location>
    </subcellularLocation>
    <subcellularLocation>
        <location evidence="2">Cytoplasm</location>
        <location evidence="2">Cytoskeleton</location>
        <location evidence="2">Spindle</location>
    </subcellularLocation>
    <subcellularLocation>
        <location evidence="2">Midbody</location>
    </subcellularLocation>
    <text evidence="2">Localizes on chromosome arms and inner centromeres from prophase through metaphase and then transferring to the spindle midzone and midbody from anaphase through cytokinesis. Colocalized with gamma tubulin in the midbody. Proper localization of the active, Thr-232-phosphorylated form during metaphase may be dependent upon interaction with SPDYC. Colocalized with SIRT2 during cytokinesis with the midbody. Localization (and probably targeting of the CPC) to the inner centromere occurs predominantly in regions with overlapping mitosis-specific histone phosphorylations H3pT3 and H2ApT12.</text>
</comment>
<comment type="PTM">
    <text evidence="2">The phosphorylation of Thr-232 requires the binding to INCENP and occurs by means of an autophosphorylation mechanism. Thr-232 phosphorylation is indispensable for the AURKB kinase activity.</text>
</comment>
<comment type="PTM">
    <text evidence="2">Acetylated at Lys-215 by KAT5 at kinetochores, increasing AURKB activity and promoting accurate chromosome segregation in mitosis.</text>
</comment>
<comment type="PTM">
    <text evidence="2">Ubiquitinated by different BCR (BTB-CUL3-RBX1) E3 ubiquitin ligase complexes. Ubiquitinated by the BCR(KLHL9-KLHL13) E3 ubiquitin ligase complex, ubiquitination leads to removal from mitotic chromosomes and is required for cytokinesis. During anaphase, the BCR(KLHL21) E3 ubiquitin ligase complex recruits the CPC complex from chromosomes to the spindle midzone and mediates the ubiquitination of AURKB. Ubiquitination of AURKB by BCR(KLHL21) E3 ubiquitin ligase complex may not lead to its degradation by the proteasome. Deubiquitinated by USP35; inhibiting CDH1-mediated degradation of AURKB.</text>
</comment>
<comment type="similarity">
    <text evidence="3">Belongs to the protein kinase superfamily. Ser/Thr protein kinase family. Aurora subfamily.</text>
</comment>
<name>AURKB_PIG</name>